<evidence type="ECO:0000255" key="1">
    <source>
        <dbReference type="HAMAP-Rule" id="MF_01085"/>
    </source>
</evidence>
<dbReference type="EMBL" id="CP000826">
    <property type="protein sequence ID" value="ABV41719.1"/>
    <property type="molecule type" value="Genomic_DNA"/>
</dbReference>
<dbReference type="SMR" id="A8GF29"/>
<dbReference type="STRING" id="399741.Spro_2618"/>
<dbReference type="KEGG" id="spe:Spro_2618"/>
<dbReference type="eggNOG" id="COG3768">
    <property type="taxonomic scope" value="Bacteria"/>
</dbReference>
<dbReference type="HOGENOM" id="CLU_057693_2_0_6"/>
<dbReference type="OrthoDB" id="958025at2"/>
<dbReference type="GO" id="GO:0005886">
    <property type="term" value="C:plasma membrane"/>
    <property type="evidence" value="ECO:0007669"/>
    <property type="project" value="UniProtKB-SubCell"/>
</dbReference>
<dbReference type="HAMAP" id="MF_01085">
    <property type="entry name" value="UPF0283"/>
    <property type="match status" value="1"/>
</dbReference>
<dbReference type="InterPro" id="IPR021147">
    <property type="entry name" value="DUF697"/>
</dbReference>
<dbReference type="InterPro" id="IPR006507">
    <property type="entry name" value="UPF0283"/>
</dbReference>
<dbReference type="NCBIfam" id="TIGR01620">
    <property type="entry name" value="hyp_HI0043"/>
    <property type="match status" value="1"/>
</dbReference>
<dbReference type="PANTHER" id="PTHR39342">
    <property type="entry name" value="UPF0283 MEMBRANE PROTEIN YCJF"/>
    <property type="match status" value="1"/>
</dbReference>
<dbReference type="PANTHER" id="PTHR39342:SF1">
    <property type="entry name" value="UPF0283 MEMBRANE PROTEIN YCJF"/>
    <property type="match status" value="1"/>
</dbReference>
<dbReference type="Pfam" id="PF05128">
    <property type="entry name" value="DUF697"/>
    <property type="match status" value="1"/>
</dbReference>
<organism>
    <name type="scientific">Serratia proteamaculans (strain 568)</name>
    <dbReference type="NCBI Taxonomy" id="399741"/>
    <lineage>
        <taxon>Bacteria</taxon>
        <taxon>Pseudomonadati</taxon>
        <taxon>Pseudomonadota</taxon>
        <taxon>Gammaproteobacteria</taxon>
        <taxon>Enterobacterales</taxon>
        <taxon>Yersiniaceae</taxon>
        <taxon>Serratia</taxon>
    </lineage>
</organism>
<sequence length="353" mass="39398">MSEPIKPRIDFEQPLEPPQEPVLRANVAFDEQQAEHFFPAAPELQQEEEEGRAEGIINAALKPKRSLWRKMVTAGLTLFGVSVVAQGVQWVHTAWVQQDWIAMGGGVAGGLIVFAGVGSVVTEWRRLYRLRQRAEERDVARELLHSHGLGKGREFCEKLARQAGLDQGHPALQRWQASLHETQNDREVVALYAKLVQPVLDNQARREISRSAAESTLMIAVSPLAVVDMAFIAWRNIRLINRIAALYGIELGYFSRLRLFRLVLLNIAFAGASELVREVGMDWMSQDLAARLSARAAQGIGAGLLTARLGIKAMELCRPLPWLEGEKPKLGDFRSQLIGQLKDTMKKSDNKAK</sequence>
<name>Y2618_SERP5</name>
<reference key="1">
    <citation type="submission" date="2007-09" db="EMBL/GenBank/DDBJ databases">
        <title>Complete sequence of chromosome of Serratia proteamaculans 568.</title>
        <authorList>
            <consortium name="US DOE Joint Genome Institute"/>
            <person name="Copeland A."/>
            <person name="Lucas S."/>
            <person name="Lapidus A."/>
            <person name="Barry K."/>
            <person name="Glavina del Rio T."/>
            <person name="Dalin E."/>
            <person name="Tice H."/>
            <person name="Pitluck S."/>
            <person name="Chain P."/>
            <person name="Malfatti S."/>
            <person name="Shin M."/>
            <person name="Vergez L."/>
            <person name="Schmutz J."/>
            <person name="Larimer F."/>
            <person name="Land M."/>
            <person name="Hauser L."/>
            <person name="Kyrpides N."/>
            <person name="Kim E."/>
            <person name="Taghavi S."/>
            <person name="Newman L."/>
            <person name="Vangronsveld J."/>
            <person name="van der Lelie D."/>
            <person name="Richardson P."/>
        </authorList>
    </citation>
    <scope>NUCLEOTIDE SEQUENCE [LARGE SCALE GENOMIC DNA]</scope>
    <source>
        <strain>568</strain>
    </source>
</reference>
<gene>
    <name type="ordered locus">Spro_2618</name>
</gene>
<protein>
    <recommendedName>
        <fullName evidence="1">UPF0283 membrane protein Spro_2618</fullName>
    </recommendedName>
</protein>
<accession>A8GF29</accession>
<comment type="subcellular location">
    <subcellularLocation>
        <location evidence="1">Cell inner membrane</location>
        <topology evidence="1">Multi-pass membrane protein</topology>
    </subcellularLocation>
</comment>
<comment type="similarity">
    <text evidence="1">Belongs to the UPF0283 family.</text>
</comment>
<keyword id="KW-0997">Cell inner membrane</keyword>
<keyword id="KW-1003">Cell membrane</keyword>
<keyword id="KW-0472">Membrane</keyword>
<keyword id="KW-0812">Transmembrane</keyword>
<keyword id="KW-1133">Transmembrane helix</keyword>
<feature type="chain" id="PRO_1000064849" description="UPF0283 membrane protein Spro_2618">
    <location>
        <begin position="1"/>
        <end position="353"/>
    </location>
</feature>
<feature type="transmembrane region" description="Helical" evidence="1">
    <location>
        <begin position="71"/>
        <end position="91"/>
    </location>
</feature>
<feature type="transmembrane region" description="Helical" evidence="1">
    <location>
        <begin position="101"/>
        <end position="121"/>
    </location>
</feature>
<feature type="transmembrane region" description="Helical" evidence="1">
    <location>
        <begin position="214"/>
        <end position="234"/>
    </location>
</feature>
<proteinExistence type="inferred from homology"/>